<protein>
    <recommendedName>
        <fullName evidence="1">Small ribosomal subunit protein uS3</fullName>
    </recommendedName>
    <alternativeName>
        <fullName evidence="2">30S ribosomal protein S3</fullName>
    </alternativeName>
</protein>
<evidence type="ECO:0000255" key="1">
    <source>
        <dbReference type="HAMAP-Rule" id="MF_01309"/>
    </source>
</evidence>
<evidence type="ECO:0000305" key="2"/>
<feature type="chain" id="PRO_0000323303" description="Small ribosomal subunit protein uS3">
    <location>
        <begin position="1"/>
        <end position="228"/>
    </location>
</feature>
<feature type="domain" description="KH type-2" evidence="1">
    <location>
        <begin position="39"/>
        <end position="107"/>
    </location>
</feature>
<keyword id="KW-0687">Ribonucleoprotein</keyword>
<keyword id="KW-0689">Ribosomal protein</keyword>
<keyword id="KW-0694">RNA-binding</keyword>
<keyword id="KW-0699">rRNA-binding</keyword>
<gene>
    <name evidence="1" type="primary">rpsC</name>
    <name type="ordered locus">Pput_0493</name>
</gene>
<accession>A5VXQ3</accession>
<sequence>MGQKVHPTGIRLGIVKEHTSVWYADGATYADYLLKDLKTREYLQDKLKSASVSRIDIHRPAQTARITIHTARPGIVIGKKGEDVEKLRQDLTKQMGVPVHINIEEIRKPELDAMLVAQSVAQQLERRVMFRRAMKRAVQNAMRIGAKGIKIQVSGRLGGAEIARTEWYREGRVPLHTLRADIDYNTYEAHTTYGVIGVKVWIFKGEVIGGRQEELKPQAPAPRKKAAK</sequence>
<proteinExistence type="inferred from homology"/>
<reference key="1">
    <citation type="submission" date="2007-05" db="EMBL/GenBank/DDBJ databases">
        <title>Complete sequence of Pseudomonas putida F1.</title>
        <authorList>
            <consortium name="US DOE Joint Genome Institute"/>
            <person name="Copeland A."/>
            <person name="Lucas S."/>
            <person name="Lapidus A."/>
            <person name="Barry K."/>
            <person name="Detter J.C."/>
            <person name="Glavina del Rio T."/>
            <person name="Hammon N."/>
            <person name="Israni S."/>
            <person name="Dalin E."/>
            <person name="Tice H."/>
            <person name="Pitluck S."/>
            <person name="Chain P."/>
            <person name="Malfatti S."/>
            <person name="Shin M."/>
            <person name="Vergez L."/>
            <person name="Schmutz J."/>
            <person name="Larimer F."/>
            <person name="Land M."/>
            <person name="Hauser L."/>
            <person name="Kyrpides N."/>
            <person name="Lykidis A."/>
            <person name="Parales R."/>
            <person name="Richardson P."/>
        </authorList>
    </citation>
    <scope>NUCLEOTIDE SEQUENCE [LARGE SCALE GENOMIC DNA]</scope>
    <source>
        <strain>ATCC 700007 / DSM 6899 / JCM 31910 / BCRC 17059 / LMG 24140 / F1</strain>
    </source>
</reference>
<name>RS3_PSEP1</name>
<organism>
    <name type="scientific">Pseudomonas putida (strain ATCC 700007 / DSM 6899 / JCM 31910 / BCRC 17059 / LMG 24140 / F1)</name>
    <dbReference type="NCBI Taxonomy" id="351746"/>
    <lineage>
        <taxon>Bacteria</taxon>
        <taxon>Pseudomonadati</taxon>
        <taxon>Pseudomonadota</taxon>
        <taxon>Gammaproteobacteria</taxon>
        <taxon>Pseudomonadales</taxon>
        <taxon>Pseudomonadaceae</taxon>
        <taxon>Pseudomonas</taxon>
    </lineage>
</organism>
<dbReference type="EMBL" id="CP000712">
    <property type="protein sequence ID" value="ABQ76663.1"/>
    <property type="molecule type" value="Genomic_DNA"/>
</dbReference>
<dbReference type="SMR" id="A5VXQ3"/>
<dbReference type="KEGG" id="ppf:Pput_0493"/>
<dbReference type="eggNOG" id="COG0092">
    <property type="taxonomic scope" value="Bacteria"/>
</dbReference>
<dbReference type="HOGENOM" id="CLU_058591_0_2_6"/>
<dbReference type="GO" id="GO:0022627">
    <property type="term" value="C:cytosolic small ribosomal subunit"/>
    <property type="evidence" value="ECO:0007669"/>
    <property type="project" value="TreeGrafter"/>
</dbReference>
<dbReference type="GO" id="GO:0003729">
    <property type="term" value="F:mRNA binding"/>
    <property type="evidence" value="ECO:0007669"/>
    <property type="project" value="UniProtKB-UniRule"/>
</dbReference>
<dbReference type="GO" id="GO:0019843">
    <property type="term" value="F:rRNA binding"/>
    <property type="evidence" value="ECO:0007669"/>
    <property type="project" value="UniProtKB-UniRule"/>
</dbReference>
<dbReference type="GO" id="GO:0003735">
    <property type="term" value="F:structural constituent of ribosome"/>
    <property type="evidence" value="ECO:0007669"/>
    <property type="project" value="InterPro"/>
</dbReference>
<dbReference type="GO" id="GO:0006412">
    <property type="term" value="P:translation"/>
    <property type="evidence" value="ECO:0007669"/>
    <property type="project" value="UniProtKB-UniRule"/>
</dbReference>
<dbReference type="CDD" id="cd02412">
    <property type="entry name" value="KH-II_30S_S3"/>
    <property type="match status" value="1"/>
</dbReference>
<dbReference type="FunFam" id="3.30.1140.32:FF:000001">
    <property type="entry name" value="30S ribosomal protein S3"/>
    <property type="match status" value="1"/>
</dbReference>
<dbReference type="FunFam" id="3.30.300.20:FF:000001">
    <property type="entry name" value="30S ribosomal protein S3"/>
    <property type="match status" value="1"/>
</dbReference>
<dbReference type="Gene3D" id="3.30.300.20">
    <property type="match status" value="1"/>
</dbReference>
<dbReference type="Gene3D" id="3.30.1140.32">
    <property type="entry name" value="Ribosomal protein S3, C-terminal domain"/>
    <property type="match status" value="1"/>
</dbReference>
<dbReference type="HAMAP" id="MF_01309_B">
    <property type="entry name" value="Ribosomal_uS3_B"/>
    <property type="match status" value="1"/>
</dbReference>
<dbReference type="InterPro" id="IPR004087">
    <property type="entry name" value="KH_dom"/>
</dbReference>
<dbReference type="InterPro" id="IPR015946">
    <property type="entry name" value="KH_dom-like_a/b"/>
</dbReference>
<dbReference type="InterPro" id="IPR004044">
    <property type="entry name" value="KH_dom_type_2"/>
</dbReference>
<dbReference type="InterPro" id="IPR009019">
    <property type="entry name" value="KH_sf_prok-type"/>
</dbReference>
<dbReference type="InterPro" id="IPR036419">
    <property type="entry name" value="Ribosomal_S3_C_sf"/>
</dbReference>
<dbReference type="InterPro" id="IPR005704">
    <property type="entry name" value="Ribosomal_uS3_bac-typ"/>
</dbReference>
<dbReference type="InterPro" id="IPR001351">
    <property type="entry name" value="Ribosomal_uS3_C"/>
</dbReference>
<dbReference type="InterPro" id="IPR018280">
    <property type="entry name" value="Ribosomal_uS3_CS"/>
</dbReference>
<dbReference type="NCBIfam" id="TIGR01009">
    <property type="entry name" value="rpsC_bact"/>
    <property type="match status" value="1"/>
</dbReference>
<dbReference type="PANTHER" id="PTHR11760">
    <property type="entry name" value="30S/40S RIBOSOMAL PROTEIN S3"/>
    <property type="match status" value="1"/>
</dbReference>
<dbReference type="PANTHER" id="PTHR11760:SF19">
    <property type="entry name" value="SMALL RIBOSOMAL SUBUNIT PROTEIN US3C"/>
    <property type="match status" value="1"/>
</dbReference>
<dbReference type="Pfam" id="PF07650">
    <property type="entry name" value="KH_2"/>
    <property type="match status" value="1"/>
</dbReference>
<dbReference type="Pfam" id="PF00189">
    <property type="entry name" value="Ribosomal_S3_C"/>
    <property type="match status" value="1"/>
</dbReference>
<dbReference type="SMART" id="SM00322">
    <property type="entry name" value="KH"/>
    <property type="match status" value="1"/>
</dbReference>
<dbReference type="SUPFAM" id="SSF54814">
    <property type="entry name" value="Prokaryotic type KH domain (KH-domain type II)"/>
    <property type="match status" value="1"/>
</dbReference>
<dbReference type="SUPFAM" id="SSF54821">
    <property type="entry name" value="Ribosomal protein S3 C-terminal domain"/>
    <property type="match status" value="1"/>
</dbReference>
<dbReference type="PROSITE" id="PS50823">
    <property type="entry name" value="KH_TYPE_2"/>
    <property type="match status" value="1"/>
</dbReference>
<dbReference type="PROSITE" id="PS00548">
    <property type="entry name" value="RIBOSOMAL_S3"/>
    <property type="match status" value="1"/>
</dbReference>
<comment type="function">
    <text evidence="1">Binds the lower part of the 30S subunit head. Binds mRNA in the 70S ribosome, positioning it for translation.</text>
</comment>
<comment type="subunit">
    <text evidence="1">Part of the 30S ribosomal subunit. Forms a tight complex with proteins S10 and S14.</text>
</comment>
<comment type="similarity">
    <text evidence="1">Belongs to the universal ribosomal protein uS3 family.</text>
</comment>